<reference key="1">
    <citation type="journal article" date="2007" name="Nature">
        <title>Evolution of genes and genomes on the Drosophila phylogeny.</title>
        <authorList>
            <consortium name="Drosophila 12 genomes consortium"/>
        </authorList>
    </citation>
    <scope>NUCLEOTIDE SEQUENCE [LARGE SCALE GENOMIC DNA]</scope>
    <source>
        <strain>Tucson 15081-1352.22</strain>
    </source>
</reference>
<accession>B4KLC0</accession>
<protein>
    <recommendedName>
        <fullName evidence="1">Anamorsin homolog</fullName>
    </recommendedName>
    <alternativeName>
        <fullName evidence="1">Fe-S cluster assembly protein DRE2 homolog</fullName>
    </alternativeName>
</protein>
<proteinExistence type="inferred from homology"/>
<organism>
    <name type="scientific">Drosophila mojavensis</name>
    <name type="common">Fruit fly</name>
    <dbReference type="NCBI Taxonomy" id="7230"/>
    <lineage>
        <taxon>Eukaryota</taxon>
        <taxon>Metazoa</taxon>
        <taxon>Ecdysozoa</taxon>
        <taxon>Arthropoda</taxon>
        <taxon>Hexapoda</taxon>
        <taxon>Insecta</taxon>
        <taxon>Pterygota</taxon>
        <taxon>Neoptera</taxon>
        <taxon>Endopterygota</taxon>
        <taxon>Diptera</taxon>
        <taxon>Brachycera</taxon>
        <taxon>Muscomorpha</taxon>
        <taxon>Ephydroidea</taxon>
        <taxon>Drosophilidae</taxon>
        <taxon>Drosophila</taxon>
    </lineage>
</organism>
<name>DRE2_DROMO</name>
<dbReference type="EMBL" id="CH933807">
    <property type="protein sequence ID" value="EDW11781.1"/>
    <property type="molecule type" value="Genomic_DNA"/>
</dbReference>
<dbReference type="SMR" id="B4KLC0"/>
<dbReference type="FunCoup" id="B4KLC0">
    <property type="interactions" value="2180"/>
</dbReference>
<dbReference type="EnsemblMetazoa" id="FBtr0168057">
    <property type="protein sequence ID" value="FBpp0166549"/>
    <property type="gene ID" value="FBgn0140076"/>
</dbReference>
<dbReference type="EnsemblMetazoa" id="XM_002002303.4">
    <property type="protein sequence ID" value="XP_002002339.1"/>
    <property type="gene ID" value="LOC6576348"/>
</dbReference>
<dbReference type="GeneID" id="6576348"/>
<dbReference type="KEGG" id="dmo:Dmoj_GI17332"/>
<dbReference type="CTD" id="57019"/>
<dbReference type="eggNOG" id="KOG4020">
    <property type="taxonomic scope" value="Eukaryota"/>
</dbReference>
<dbReference type="HOGENOM" id="CLU_064393_1_0_1"/>
<dbReference type="InParanoid" id="B4KLC0"/>
<dbReference type="OMA" id="GFINCRE"/>
<dbReference type="OrthoDB" id="311633at2759"/>
<dbReference type="PhylomeDB" id="B4KLC0"/>
<dbReference type="Proteomes" id="UP000009192">
    <property type="component" value="Unassembled WGS sequence"/>
</dbReference>
<dbReference type="GO" id="GO:0005758">
    <property type="term" value="C:mitochondrial intermembrane space"/>
    <property type="evidence" value="ECO:0007669"/>
    <property type="project" value="UniProtKB-SubCell"/>
</dbReference>
<dbReference type="GO" id="GO:0051537">
    <property type="term" value="F:2 iron, 2 sulfur cluster binding"/>
    <property type="evidence" value="ECO:0007669"/>
    <property type="project" value="UniProtKB-UniRule"/>
</dbReference>
<dbReference type="GO" id="GO:0051539">
    <property type="term" value="F:4 iron, 4 sulfur cluster binding"/>
    <property type="evidence" value="ECO:0007669"/>
    <property type="project" value="UniProtKB-KW"/>
</dbReference>
<dbReference type="GO" id="GO:0009055">
    <property type="term" value="F:electron transfer activity"/>
    <property type="evidence" value="ECO:0007669"/>
    <property type="project" value="UniProtKB-UniRule"/>
</dbReference>
<dbReference type="GO" id="GO:0046872">
    <property type="term" value="F:metal ion binding"/>
    <property type="evidence" value="ECO:0007669"/>
    <property type="project" value="UniProtKB-KW"/>
</dbReference>
<dbReference type="GO" id="GO:0016226">
    <property type="term" value="P:iron-sulfur cluster assembly"/>
    <property type="evidence" value="ECO:0007669"/>
    <property type="project" value="UniProtKB-UniRule"/>
</dbReference>
<dbReference type="Gene3D" id="3.40.50.150">
    <property type="entry name" value="Vaccinia Virus protein VP39"/>
    <property type="match status" value="1"/>
</dbReference>
<dbReference type="HAMAP" id="MF_03115">
    <property type="entry name" value="Anamorsin"/>
    <property type="match status" value="1"/>
</dbReference>
<dbReference type="InterPro" id="IPR007785">
    <property type="entry name" value="Anamorsin"/>
</dbReference>
<dbReference type="InterPro" id="IPR049011">
    <property type="entry name" value="Anamorsin_N_metazoan"/>
</dbReference>
<dbReference type="InterPro" id="IPR046408">
    <property type="entry name" value="CIAPIN1"/>
</dbReference>
<dbReference type="InterPro" id="IPR029063">
    <property type="entry name" value="SAM-dependent_MTases_sf"/>
</dbReference>
<dbReference type="PANTHER" id="PTHR13273">
    <property type="entry name" value="ANAMORSIN"/>
    <property type="match status" value="1"/>
</dbReference>
<dbReference type="PANTHER" id="PTHR13273:SF14">
    <property type="entry name" value="ANAMORSIN"/>
    <property type="match status" value="1"/>
</dbReference>
<dbReference type="Pfam" id="PF20922">
    <property type="entry name" value="Anamorsin_N"/>
    <property type="match status" value="1"/>
</dbReference>
<dbReference type="Pfam" id="PF05093">
    <property type="entry name" value="CIAPIN1"/>
    <property type="match status" value="2"/>
</dbReference>
<sequence>MEQFKGLQKSLYIWTDSGELDKRVQALKEATGGEVAVENVHRLSFSSYANSSFDLIVIECAQLTDNYVKLLHMLKPSGKLHLFAYIGPAANLLQEIKLSGFINCSEDAAANTLTAEKPGYETGSSARLSFAKKSPSMNVWKISGDDEELIDEEELLDEEDKQKPDPAGLRVCSTTGKRKACKNCSCGLAEELEDEKKTKAATENAKSSCGNCYLGDAFRCSTCPYLGMPAFKPGEKVQLADNLLKSDI</sequence>
<comment type="function">
    <text evidence="1">Component of the cytosolic iron-sulfur (Fe-S) protein assembly (CIA) machinery. Required for the maturation of extramitochondrial Fe-S proteins. Part of an electron transfer chain functioning in an early step of cytosolic Fe-S biogenesis, facilitating the de novo assembly of a [4Fe-4S] cluster on the cytosolic Fe-S scaffold complex. Electrons are transferred from NADPH via a FAD- and FMN-containing diflavin oxidoreductase. Together with the diflavin oxidoreductase, also required for the assembly of the diferric tyrosyl radical cofactor of ribonucleotide reductase (RNR), probably by providing electrons for reduction during radical cofactor maturation in the catalytic small subunit.</text>
</comment>
<comment type="cofactor">
    <cofactor evidence="1">
        <name>[2Fe-2S] cluster</name>
        <dbReference type="ChEBI" id="CHEBI:190135"/>
    </cofactor>
</comment>
<comment type="cofactor">
    <cofactor evidence="1">
        <name>[4Fe-4S] cluster</name>
        <dbReference type="ChEBI" id="CHEBI:49883"/>
    </cofactor>
</comment>
<comment type="subunit">
    <text evidence="1">Monomer.</text>
</comment>
<comment type="subcellular location">
    <subcellularLocation>
        <location evidence="1">Cytoplasm</location>
    </subcellularLocation>
    <subcellularLocation>
        <location evidence="1">Mitochondrion intermembrane space</location>
    </subcellularLocation>
</comment>
<comment type="domain">
    <text evidence="1">The C-terminal domain binds 2 Fe-S clusters but is otherwise mostly in an intrinsically disordered conformation.</text>
</comment>
<comment type="domain">
    <text evidence="1">The N-terminal domain has structural similarity with S-adenosyl-L-methionine-dependent methyltransferases, but does not bind S-adenosyl-L-methionine. It is required for correct assembly of the 2 Fe-S clusters.</text>
</comment>
<comment type="domain">
    <text evidence="1">The twin Cx2C motifs are involved in the recognition by the mitochondrial MIA40-ERV1 disulfide relay system. The formation of 2 disulfide bonds in the Cx2C motifs through dithiol/disulfide exchange reactions effectively traps the protein in the mitochondrial intermembrane space.</text>
</comment>
<comment type="similarity">
    <text evidence="1">Belongs to the anamorsin family.</text>
</comment>
<keyword id="KW-0001">2Fe-2S</keyword>
<keyword id="KW-0004">4Fe-4S</keyword>
<keyword id="KW-0963">Cytoplasm</keyword>
<keyword id="KW-0408">Iron</keyword>
<keyword id="KW-0411">Iron-sulfur</keyword>
<keyword id="KW-0479">Metal-binding</keyword>
<keyword id="KW-0496">Mitochondrion</keyword>
<keyword id="KW-1185">Reference proteome</keyword>
<gene>
    <name evidence="1" type="primary">CIAPIN1</name>
    <name evidence="1" type="synonym">l(2)35Bg</name>
    <name type="ORF">GI17332</name>
</gene>
<evidence type="ECO:0000255" key="1">
    <source>
        <dbReference type="HAMAP-Rule" id="MF_03115"/>
    </source>
</evidence>
<feature type="chain" id="PRO_0000392318" description="Anamorsin homolog">
    <location>
        <begin position="1"/>
        <end position="248"/>
    </location>
</feature>
<feature type="region of interest" description="N-terminal SAM-like domain" evidence="1">
    <location>
        <begin position="4"/>
        <end position="130"/>
    </location>
</feature>
<feature type="region of interest" description="Linker" evidence="1">
    <location>
        <begin position="131"/>
        <end position="161"/>
    </location>
</feature>
<feature type="region of interest" description="Fe-S binding site A" evidence="1">
    <location>
        <begin position="172"/>
        <end position="186"/>
    </location>
</feature>
<feature type="region of interest" description="Fe-S binding site B" evidence="1">
    <location>
        <begin position="209"/>
        <end position="223"/>
    </location>
</feature>
<feature type="short sequence motif" description="Cx2C motif 1" evidence="1">
    <location>
        <begin position="209"/>
        <end position="212"/>
    </location>
</feature>
<feature type="short sequence motif" description="Cx2C motif 2" evidence="1">
    <location>
        <begin position="220"/>
        <end position="223"/>
    </location>
</feature>
<feature type="binding site" evidence="1">
    <location>
        <position position="172"/>
    </location>
    <ligand>
        <name>[2Fe-2S] cluster</name>
        <dbReference type="ChEBI" id="CHEBI:190135"/>
    </ligand>
</feature>
<feature type="binding site" evidence="1">
    <location>
        <position position="181"/>
    </location>
    <ligand>
        <name>[2Fe-2S] cluster</name>
        <dbReference type="ChEBI" id="CHEBI:190135"/>
    </ligand>
</feature>
<feature type="binding site" evidence="1">
    <location>
        <position position="184"/>
    </location>
    <ligand>
        <name>[2Fe-2S] cluster</name>
        <dbReference type="ChEBI" id="CHEBI:190135"/>
    </ligand>
</feature>
<feature type="binding site" evidence="1">
    <location>
        <position position="186"/>
    </location>
    <ligand>
        <name>[2Fe-2S] cluster</name>
        <dbReference type="ChEBI" id="CHEBI:190135"/>
    </ligand>
</feature>
<feature type="binding site" evidence="1">
    <location>
        <position position="209"/>
    </location>
    <ligand>
        <name>[4Fe-4S] cluster</name>
        <dbReference type="ChEBI" id="CHEBI:49883"/>
    </ligand>
</feature>
<feature type="binding site" evidence="1">
    <location>
        <position position="212"/>
    </location>
    <ligand>
        <name>[4Fe-4S] cluster</name>
        <dbReference type="ChEBI" id="CHEBI:49883"/>
    </ligand>
</feature>
<feature type="binding site" evidence="1">
    <location>
        <position position="220"/>
    </location>
    <ligand>
        <name>[4Fe-4S] cluster</name>
        <dbReference type="ChEBI" id="CHEBI:49883"/>
    </ligand>
</feature>
<feature type="binding site" evidence="1">
    <location>
        <position position="223"/>
    </location>
    <ligand>
        <name>[4Fe-4S] cluster</name>
        <dbReference type="ChEBI" id="CHEBI:49883"/>
    </ligand>
</feature>